<gene>
    <name evidence="4" type="primary">mmdD</name>
</gene>
<feature type="chain" id="PRO_0000453538" description="Methylmalonyl-CoA decarboxylase subunit delta">
    <location>
        <begin position="1"/>
        <end position="137"/>
    </location>
</feature>
<feature type="transmembrane region" description="Helical" evidence="2">
    <location>
        <begin position="30"/>
        <end position="50"/>
    </location>
</feature>
<keyword id="KW-1003">Cell membrane</keyword>
<keyword id="KW-0406">Ion transport</keyword>
<keyword id="KW-0472">Membrane</keyword>
<keyword id="KW-0915">Sodium</keyword>
<keyword id="KW-0739">Sodium transport</keyword>
<keyword id="KW-1278">Translocase</keyword>
<keyword id="KW-0812">Transmembrane</keyword>
<keyword id="KW-1133">Transmembrane helix</keyword>
<keyword id="KW-0813">Transport</keyword>
<protein>
    <recommendedName>
        <fullName evidence="5">Methylmalonyl-CoA decarboxylase subunit delta</fullName>
        <ecNumber evidence="3">7.2.4.3</ecNumber>
    </recommendedName>
</protein>
<comment type="function">
    <text evidence="1 3">Subunit of the sodium ion pump methylmalonyl-CoA decarboxylase, which converts the chemical energy of a decarboxylation reaction into an electrochemical gradient of Na(+) ions across the cytoplasmic membrane, thereby creating a sodium ion motive force that is used for ATP synthesis (PubMed:9428714). The delta subunit is required for catalytic activity as well as for the proper assembly of the individual subunits to an enzyme complex (By similarity).</text>
</comment>
<comment type="catalytic activity">
    <reaction evidence="3">
        <text>(S)-methylmalonyl-CoA + Na(+)(in) + H(+)(out) = propanoyl-CoA + Na(+)(out) + CO2</text>
        <dbReference type="Rhea" id="RHEA:21396"/>
        <dbReference type="ChEBI" id="CHEBI:15378"/>
        <dbReference type="ChEBI" id="CHEBI:16526"/>
        <dbReference type="ChEBI" id="CHEBI:29101"/>
        <dbReference type="ChEBI" id="CHEBI:57327"/>
        <dbReference type="ChEBI" id="CHEBI:57392"/>
        <dbReference type="EC" id="7.2.4.3"/>
    </reaction>
</comment>
<comment type="subunit">
    <text evidence="3">The methylmalonyl-CoA decarboxylase is composed of four subunits: the carboxyltransferase alpha subunit (MmdA), the tunnel beta subunit (MmdB), the biotin-containing gamma subunit (MmdC) and the delta subunit (MmdD).</text>
</comment>
<comment type="subcellular location">
    <subcellularLocation>
        <location evidence="3">Cell membrane</location>
        <topology evidence="2">Single-pass membrane protein</topology>
    </subcellularLocation>
</comment>
<comment type="similarity">
    <text evidence="5">Belongs to the OadG family.</text>
</comment>
<accession>O54029</accession>
<organism>
    <name type="scientific">Propionigenium modestum</name>
    <dbReference type="NCBI Taxonomy" id="2333"/>
    <lineage>
        <taxon>Bacteria</taxon>
        <taxon>Fusobacteriati</taxon>
        <taxon>Fusobacteriota</taxon>
        <taxon>Fusobacteriia</taxon>
        <taxon>Fusobacteriales</taxon>
        <taxon>Fusobacteriaceae</taxon>
        <taxon>Propionigenium</taxon>
    </lineage>
</organism>
<evidence type="ECO:0000250" key="1">
    <source>
        <dbReference type="UniProtKB" id="Q56724"/>
    </source>
</evidence>
<evidence type="ECO:0000255" key="2"/>
<evidence type="ECO:0000269" key="3">
    <source>
    </source>
</evidence>
<evidence type="ECO:0000303" key="4">
    <source>
    </source>
</evidence>
<evidence type="ECO:0000305" key="5"/>
<name>MMDD_PROMO</name>
<proteinExistence type="evidence at protein level"/>
<reference key="1">
    <citation type="journal article" date="1997" name="Eur. J. Biochem.">
        <title>Methylmalonyl-CoA decarboxylase from Propionigenium modestum--cloning and sequencing of the structural genes and purification of the enzyme complex.</title>
        <authorList>
            <person name="Bott M."/>
            <person name="Pfister K."/>
            <person name="Burda P."/>
            <person name="Kalbermatter O."/>
            <person name="Woehlke G."/>
            <person name="Dimroth P."/>
        </authorList>
    </citation>
    <scope>NUCLEOTIDE SEQUENCE [GENOMIC DNA]</scope>
    <scope>FUNCTION</scope>
    <scope>CATALYTIC ACTIVITY</scope>
    <scope>SUBUNIT</scope>
    <scope>SUBCELLULAR LOCATION</scope>
    <source>
        <strain>DSM 2376 / Gra Succ2</strain>
    </source>
</reference>
<dbReference type="EC" id="7.2.4.3" evidence="3"/>
<dbReference type="EMBL" id="AJ002015">
    <property type="protein sequence ID" value="CAA05138.1"/>
    <property type="molecule type" value="Genomic_DNA"/>
</dbReference>
<dbReference type="PIR" id="T44983">
    <property type="entry name" value="T44983"/>
</dbReference>
<dbReference type="SMR" id="O54029"/>
<dbReference type="KEGG" id="ag:CAA05138"/>
<dbReference type="GO" id="GO:0005886">
    <property type="term" value="C:plasma membrane"/>
    <property type="evidence" value="ECO:0007669"/>
    <property type="project" value="UniProtKB-SubCell"/>
</dbReference>
<dbReference type="GO" id="GO:0015451">
    <property type="term" value="F:decarboxylation-driven active transmembrane transporter activity"/>
    <property type="evidence" value="ECO:0007669"/>
    <property type="project" value="UniProtKB-EC"/>
</dbReference>
<dbReference type="GO" id="GO:0015081">
    <property type="term" value="F:sodium ion transmembrane transporter activity"/>
    <property type="evidence" value="ECO:0007669"/>
    <property type="project" value="InterPro"/>
</dbReference>
<dbReference type="GO" id="GO:0036376">
    <property type="term" value="P:sodium ion export across plasma membrane"/>
    <property type="evidence" value="ECO:0007669"/>
    <property type="project" value="InterPro"/>
</dbReference>
<dbReference type="InterPro" id="IPR005899">
    <property type="entry name" value="Na_pump_deCOase"/>
</dbReference>
<dbReference type="NCBIfam" id="TIGR01195">
    <property type="entry name" value="oadG_fam"/>
    <property type="match status" value="1"/>
</dbReference>
<dbReference type="Pfam" id="PF04277">
    <property type="entry name" value="OAD_gamma"/>
    <property type="match status" value="1"/>
</dbReference>
<sequence length="137" mass="14166">MNITELMELFSNPETIKTLETGDLMTGIGVTVVLGMGITVVALIFLMYIIGGMAAIMAEKPKEVKETAAAAPKPEAAAAPAPAANNDEELVAVIAAAVAAQLGTSASNLIIRNVTRSLDTTPAWGRAGIVDQMATRL</sequence>